<comment type="subcellular location">
    <subcellularLocation>
        <location>Cytoplasm</location>
    </subcellularLocation>
    <subcellularLocation>
        <location>Mitochondrion</location>
    </subcellularLocation>
</comment>
<comment type="miscellaneous">
    <text evidence="2">Present with 1230 molecules/cell in log phase SD medium.</text>
</comment>
<keyword id="KW-0963">Cytoplasm</keyword>
<keyword id="KW-0496">Mitochondrion</keyword>
<keyword id="KW-0597">Phosphoprotein</keyword>
<keyword id="KW-1185">Reference proteome</keyword>
<feature type="chain" id="PRO_0000203108" description="Uncharacterized protein YJR098C">
    <location>
        <begin position="1"/>
        <end position="656"/>
    </location>
</feature>
<feature type="region of interest" description="Disordered" evidence="1">
    <location>
        <begin position="1"/>
        <end position="41"/>
    </location>
</feature>
<feature type="region of interest" description="Disordered" evidence="1">
    <location>
        <begin position="60"/>
        <end position="88"/>
    </location>
</feature>
<feature type="compositionally biased region" description="Low complexity" evidence="1">
    <location>
        <begin position="22"/>
        <end position="36"/>
    </location>
</feature>
<feature type="compositionally biased region" description="Basic and acidic residues" evidence="1">
    <location>
        <begin position="62"/>
        <end position="78"/>
    </location>
</feature>
<feature type="modified residue" description="Phosphoserine" evidence="4">
    <location>
        <position position="39"/>
    </location>
</feature>
<feature type="sequence conflict" description="In Ref. 1; CAA89628." evidence="3" ref="1">
    <original>TIFTKE</original>
    <variation>LFSLR</variation>
    <location>
        <begin position="410"/>
        <end position="415"/>
    </location>
</feature>
<dbReference type="EMBL" id="Z49598">
    <property type="protein sequence ID" value="CAA89628.1"/>
    <property type="molecule type" value="Genomic_DNA"/>
</dbReference>
<dbReference type="EMBL" id="BK006943">
    <property type="protein sequence ID" value="DAA08883.2"/>
    <property type="molecule type" value="Genomic_DNA"/>
</dbReference>
<dbReference type="PIR" id="S57119">
    <property type="entry name" value="S57119"/>
</dbReference>
<dbReference type="RefSeq" id="NP_012632.2">
    <property type="nucleotide sequence ID" value="NM_001181756.2"/>
</dbReference>
<dbReference type="SMR" id="P47139"/>
<dbReference type="BioGRID" id="33853">
    <property type="interactions" value="69"/>
</dbReference>
<dbReference type="DIP" id="DIP-6674N"/>
<dbReference type="FunCoup" id="P47139">
    <property type="interactions" value="60"/>
</dbReference>
<dbReference type="MINT" id="P47139"/>
<dbReference type="STRING" id="4932.YJR098C"/>
<dbReference type="ESTHER" id="yeast-yj68">
    <property type="family name" value="PC-sterol_acyltransferase"/>
</dbReference>
<dbReference type="iPTMnet" id="P47139"/>
<dbReference type="PaxDb" id="4932-YJR098C"/>
<dbReference type="PeptideAtlas" id="P47139"/>
<dbReference type="EnsemblFungi" id="YJR098C_mRNA">
    <property type="protein sequence ID" value="YJR098C"/>
    <property type="gene ID" value="YJR098C"/>
</dbReference>
<dbReference type="GeneID" id="853561"/>
<dbReference type="KEGG" id="sce:YJR098C"/>
<dbReference type="AGR" id="SGD:S000003859"/>
<dbReference type="SGD" id="S000003859">
    <property type="gene designation" value="YJR098C"/>
</dbReference>
<dbReference type="VEuPathDB" id="FungiDB:YJR098C"/>
<dbReference type="eggNOG" id="ENOG502QVNJ">
    <property type="taxonomic scope" value="Eukaryota"/>
</dbReference>
<dbReference type="HOGENOM" id="CLU_007657_1_0_1"/>
<dbReference type="InParanoid" id="P47139"/>
<dbReference type="OMA" id="RFRAVKH"/>
<dbReference type="OrthoDB" id="10250441at2759"/>
<dbReference type="BioCyc" id="YEAST:G3O-31726-MONOMER"/>
<dbReference type="Reactome" id="R-SCE-1483115">
    <property type="pathway name" value="Hydrolysis of LPC"/>
</dbReference>
<dbReference type="Reactome" id="R-SCE-8964058">
    <property type="pathway name" value="HDL remodeling"/>
</dbReference>
<dbReference type="BioGRID-ORCS" id="853561">
    <property type="hits" value="3 hits in 10 CRISPR screens"/>
</dbReference>
<dbReference type="PRO" id="PR:P47139"/>
<dbReference type="Proteomes" id="UP000002311">
    <property type="component" value="Chromosome X"/>
</dbReference>
<dbReference type="RNAct" id="P47139">
    <property type="molecule type" value="protein"/>
</dbReference>
<dbReference type="GO" id="GO:0005737">
    <property type="term" value="C:cytoplasm"/>
    <property type="evidence" value="ECO:0007005"/>
    <property type="project" value="SGD"/>
</dbReference>
<dbReference type="GO" id="GO:0005739">
    <property type="term" value="C:mitochondrion"/>
    <property type="evidence" value="ECO:0007005"/>
    <property type="project" value="SGD"/>
</dbReference>
<dbReference type="GO" id="GO:0008374">
    <property type="term" value="F:O-acyltransferase activity"/>
    <property type="evidence" value="ECO:0007669"/>
    <property type="project" value="InterPro"/>
</dbReference>
<dbReference type="GO" id="GO:0006629">
    <property type="term" value="P:lipid metabolic process"/>
    <property type="evidence" value="ECO:0000318"/>
    <property type="project" value="GO_Central"/>
</dbReference>
<dbReference type="FunFam" id="3.40.50.1820:FF:000428">
    <property type="entry name" value="YJR098C-like protein"/>
    <property type="match status" value="1"/>
</dbReference>
<dbReference type="Gene3D" id="3.40.50.1820">
    <property type="entry name" value="alpha/beta hydrolase"/>
    <property type="match status" value="1"/>
</dbReference>
<dbReference type="InterPro" id="IPR029058">
    <property type="entry name" value="AB_hydrolase_fold"/>
</dbReference>
<dbReference type="InterPro" id="IPR003386">
    <property type="entry name" value="LACT/PDAT_acylTrfase"/>
</dbReference>
<dbReference type="PANTHER" id="PTHR11440">
    <property type="entry name" value="LECITHIN-CHOLESTEROL ACYLTRANSFERASE-RELATED"/>
    <property type="match status" value="1"/>
</dbReference>
<dbReference type="Pfam" id="PF02450">
    <property type="entry name" value="LCAT"/>
    <property type="match status" value="1"/>
</dbReference>
<dbReference type="SUPFAM" id="SSF53474">
    <property type="entry name" value="alpha/beta-Hydrolases"/>
    <property type="match status" value="1"/>
</dbReference>
<accession>P47139</accession>
<accession>D6VWR7</accession>
<protein>
    <recommendedName>
        <fullName>Uncharacterized protein YJR098C</fullName>
    </recommendedName>
</protein>
<gene>
    <name type="ordered locus">YJR098C</name>
    <name type="ORF">J1936</name>
</gene>
<proteinExistence type="evidence at protein level"/>
<name>YJ68_YEAST</name>
<organism>
    <name type="scientific">Saccharomyces cerevisiae (strain ATCC 204508 / S288c)</name>
    <name type="common">Baker's yeast</name>
    <dbReference type="NCBI Taxonomy" id="559292"/>
    <lineage>
        <taxon>Eukaryota</taxon>
        <taxon>Fungi</taxon>
        <taxon>Dikarya</taxon>
        <taxon>Ascomycota</taxon>
        <taxon>Saccharomycotina</taxon>
        <taxon>Saccharomycetes</taxon>
        <taxon>Saccharomycetales</taxon>
        <taxon>Saccharomycetaceae</taxon>
        <taxon>Saccharomyces</taxon>
    </lineage>
</organism>
<evidence type="ECO:0000256" key="1">
    <source>
        <dbReference type="SAM" id="MobiDB-lite"/>
    </source>
</evidence>
<evidence type="ECO:0000269" key="2">
    <source>
    </source>
</evidence>
<evidence type="ECO:0000305" key="3"/>
<evidence type="ECO:0007744" key="4">
    <source>
    </source>
</evidence>
<reference key="1">
    <citation type="journal article" date="1996" name="EMBO J.">
        <title>Complete nucleotide sequence of Saccharomyces cerevisiae chromosome X.</title>
        <authorList>
            <person name="Galibert F."/>
            <person name="Alexandraki D."/>
            <person name="Baur A."/>
            <person name="Boles E."/>
            <person name="Chalwatzis N."/>
            <person name="Chuat J.-C."/>
            <person name="Coster F."/>
            <person name="Cziepluch C."/>
            <person name="de Haan M."/>
            <person name="Domdey H."/>
            <person name="Durand P."/>
            <person name="Entian K.-D."/>
            <person name="Gatius M."/>
            <person name="Goffeau A."/>
            <person name="Grivell L.A."/>
            <person name="Hennemann A."/>
            <person name="Herbert C.J."/>
            <person name="Heumann K."/>
            <person name="Hilger F."/>
            <person name="Hollenberg C.P."/>
            <person name="Huang M.-E."/>
            <person name="Jacq C."/>
            <person name="Jauniaux J.-C."/>
            <person name="Katsoulou C."/>
            <person name="Kirchrath L."/>
            <person name="Kleine K."/>
            <person name="Kordes E."/>
            <person name="Koetter P."/>
            <person name="Liebl S."/>
            <person name="Louis E.J."/>
            <person name="Manus V."/>
            <person name="Mewes H.-W."/>
            <person name="Miosga T."/>
            <person name="Obermaier B."/>
            <person name="Perea J."/>
            <person name="Pohl T.M."/>
            <person name="Portetelle D."/>
            <person name="Pujol A."/>
            <person name="Purnelle B."/>
            <person name="Ramezani Rad M."/>
            <person name="Rasmussen S.W."/>
            <person name="Rose M."/>
            <person name="Rossau R."/>
            <person name="Schaaff-Gerstenschlaeger I."/>
            <person name="Smits P.H.M."/>
            <person name="Scarcez T."/>
            <person name="Soriano N."/>
            <person name="To Van D."/>
            <person name="Tzermia M."/>
            <person name="Van Broekhoven A."/>
            <person name="Vandenbol M."/>
            <person name="Wedler H."/>
            <person name="von Wettstein D."/>
            <person name="Wambutt R."/>
            <person name="Zagulski M."/>
            <person name="Zollner A."/>
            <person name="Karpfinger-Hartl L."/>
        </authorList>
    </citation>
    <scope>NUCLEOTIDE SEQUENCE [LARGE SCALE GENOMIC DNA]</scope>
    <source>
        <strain>ATCC 204508 / S288c</strain>
    </source>
</reference>
<reference key="2">
    <citation type="journal article" date="2014" name="G3 (Bethesda)">
        <title>The reference genome sequence of Saccharomyces cerevisiae: Then and now.</title>
        <authorList>
            <person name="Engel S.R."/>
            <person name="Dietrich F.S."/>
            <person name="Fisk D.G."/>
            <person name="Binkley G."/>
            <person name="Balakrishnan R."/>
            <person name="Costanzo M.C."/>
            <person name="Dwight S.S."/>
            <person name="Hitz B.C."/>
            <person name="Karra K."/>
            <person name="Nash R.S."/>
            <person name="Weng S."/>
            <person name="Wong E.D."/>
            <person name="Lloyd P."/>
            <person name="Skrzypek M.S."/>
            <person name="Miyasato S.R."/>
            <person name="Simison M."/>
            <person name="Cherry J.M."/>
        </authorList>
    </citation>
    <scope>GENOME REANNOTATION</scope>
    <scope>SEQUENCE REVISION TO 410-415</scope>
    <source>
        <strain>ATCC 204508 / S288c</strain>
    </source>
</reference>
<reference key="3">
    <citation type="journal article" date="2003" name="Nature">
        <title>Global analysis of protein localization in budding yeast.</title>
        <authorList>
            <person name="Huh W.-K."/>
            <person name="Falvo J.V."/>
            <person name="Gerke L.C."/>
            <person name="Carroll A.S."/>
            <person name="Howson R.W."/>
            <person name="Weissman J.S."/>
            <person name="O'Shea E.K."/>
        </authorList>
    </citation>
    <scope>SUBCELLULAR LOCATION [LARGE SCALE ANALYSIS]</scope>
</reference>
<reference key="4">
    <citation type="journal article" date="2003" name="Nature">
        <title>Global analysis of protein expression in yeast.</title>
        <authorList>
            <person name="Ghaemmaghami S."/>
            <person name="Huh W.-K."/>
            <person name="Bower K."/>
            <person name="Howson R.W."/>
            <person name="Belle A."/>
            <person name="Dephoure N."/>
            <person name="O'Shea E.K."/>
            <person name="Weissman J.S."/>
        </authorList>
    </citation>
    <scope>LEVEL OF PROTEIN EXPRESSION [LARGE SCALE ANALYSIS]</scope>
</reference>
<reference key="5">
    <citation type="journal article" date="2003" name="Proc. Natl. Acad. Sci. U.S.A.">
        <title>The proteome of Saccharomyces cerevisiae mitochondria.</title>
        <authorList>
            <person name="Sickmann A."/>
            <person name="Reinders J."/>
            <person name="Wagner Y."/>
            <person name="Joppich C."/>
            <person name="Zahedi R.P."/>
            <person name="Meyer H.E."/>
            <person name="Schoenfisch B."/>
            <person name="Perschil I."/>
            <person name="Chacinska A."/>
            <person name="Guiard B."/>
            <person name="Rehling P."/>
            <person name="Pfanner N."/>
            <person name="Meisinger C."/>
        </authorList>
    </citation>
    <scope>SUBCELLULAR LOCATION [LARGE SCALE ANALYSIS]</scope>
</reference>
<reference key="6">
    <citation type="journal article" date="2008" name="Mol. Cell. Proteomics">
        <title>A multidimensional chromatography technology for in-depth phosphoproteome analysis.</title>
        <authorList>
            <person name="Albuquerque C.P."/>
            <person name="Smolka M.B."/>
            <person name="Payne S.H."/>
            <person name="Bafna V."/>
            <person name="Eng J."/>
            <person name="Zhou H."/>
        </authorList>
    </citation>
    <scope>PHOSPHORYLATION [LARGE SCALE ANALYSIS] AT SER-39</scope>
    <scope>IDENTIFICATION BY MASS SPECTROMETRY [LARGE SCALE ANALYSIS]</scope>
</reference>
<sequence>MMATPATDLISDNDKYNKQCLSDSSDSGSDVSFFSVNESEGELDTMEKVDTLIGGARVISNKVEKDSDSEQRGRKKETTGPNNYHNLEEKQASAISLDADDEDLDEIISYSHDGNYDSSHKTFSFSLPFGNTNFRSSSPLAIIKTVLPKTPDEFIKKNLRKNEIKQKLKKSTSISSLEEIELFKYERGIDNSRLRAVKESLEMDALKNSIKQITADPFDKTHDGYYRSRLESIWNELEGDVVIMGGYRGSVLRDATTHKRIWIPLKAGLNMTKVDLLIGPNDEDELKTQKEIVPDGMLTHIGPVDISKRLIKRLDANPNLNVQQFGYDWRLSLDISAKHLTTKLEEIYNKQKNKKGIYIIAHSMGGLVAHKVLQDCTHLIRGIIYVGSPSQCPNILGPIRFGDDVMWNKTIFTKETNFFMRSSFYFLPLDGRCFVDKITLERYDFDFFDTDVWKTLGLSPLVNEKREESAHEKSKLLPRKTKSALSLKATLNATTKFVLNAPVVRNVAGNNKQVPRDVPFDEVFHTSYEDSCEYLARTLKRTKNYLDSLDYDPNKEYPPLAMVYGNKVPTVRGAKVNGIQDIKDGNYEDFYYGPGDGVVHHKWLLPEQRGFPVVCKIASSSGHVSLMTDLKSMAKAFISIVDSEKEGRRSRTRTSS</sequence>